<feature type="initiator methionine" description="Removed" evidence="1">
    <location>
        <position position="1"/>
    </location>
</feature>
<feature type="chain" id="PRO_0000359668" description="Photosystem II D2 protein">
    <location>
        <begin position="2"/>
        <end position="353"/>
    </location>
</feature>
<feature type="transmembrane region" description="Helical" evidence="2">
    <location>
        <begin position="41"/>
        <end position="61"/>
    </location>
</feature>
<feature type="transmembrane region" description="Helical" evidence="2">
    <location>
        <begin position="125"/>
        <end position="141"/>
    </location>
</feature>
<feature type="transmembrane region" description="Helical" evidence="2">
    <location>
        <begin position="153"/>
        <end position="166"/>
    </location>
</feature>
<feature type="transmembrane region" description="Helical" evidence="2">
    <location>
        <begin position="208"/>
        <end position="228"/>
    </location>
</feature>
<feature type="transmembrane region" description="Helical" evidence="2">
    <location>
        <begin position="279"/>
        <end position="295"/>
    </location>
</feature>
<feature type="binding site" description="axial binding residue" evidence="2">
    <location>
        <position position="118"/>
    </location>
    <ligand>
        <name>chlorophyll a</name>
        <dbReference type="ChEBI" id="CHEBI:58416"/>
        <label>ChlzD2</label>
    </ligand>
    <ligandPart>
        <name>Mg</name>
        <dbReference type="ChEBI" id="CHEBI:25107"/>
    </ligandPart>
</feature>
<feature type="binding site" evidence="2">
    <location>
        <position position="130"/>
    </location>
    <ligand>
        <name>pheophytin a</name>
        <dbReference type="ChEBI" id="CHEBI:136840"/>
        <label>D2</label>
    </ligand>
</feature>
<feature type="binding site" evidence="2">
    <location>
        <position position="143"/>
    </location>
    <ligand>
        <name>pheophytin a</name>
        <dbReference type="ChEBI" id="CHEBI:136840"/>
        <label>D2</label>
    </ligand>
</feature>
<feature type="binding site" description="axial binding residue" evidence="2">
    <location>
        <position position="198"/>
    </location>
    <ligand>
        <name>chlorophyll a</name>
        <dbReference type="ChEBI" id="CHEBI:58416"/>
        <label>PD2</label>
    </ligand>
    <ligandPart>
        <name>Mg</name>
        <dbReference type="ChEBI" id="CHEBI:25107"/>
    </ligandPart>
</feature>
<feature type="binding site" evidence="2">
    <location>
        <position position="215"/>
    </location>
    <ligand>
        <name>a plastoquinone</name>
        <dbReference type="ChEBI" id="CHEBI:17757"/>
        <label>Q(A)</label>
    </ligand>
</feature>
<feature type="binding site" evidence="2">
    <location>
        <position position="215"/>
    </location>
    <ligand>
        <name>Fe cation</name>
        <dbReference type="ChEBI" id="CHEBI:24875"/>
        <note>ligand shared with heterodimeric partner</note>
    </ligand>
</feature>
<feature type="binding site" evidence="2">
    <location>
        <position position="262"/>
    </location>
    <ligand>
        <name>a plastoquinone</name>
        <dbReference type="ChEBI" id="CHEBI:17757"/>
        <label>Q(A)</label>
    </ligand>
</feature>
<feature type="binding site" evidence="2">
    <location>
        <position position="269"/>
    </location>
    <ligand>
        <name>Fe cation</name>
        <dbReference type="ChEBI" id="CHEBI:24875"/>
        <note>ligand shared with heterodimeric partner</note>
    </ligand>
</feature>
<feature type="modified residue" description="N-acetylthreonine" evidence="1">
    <location>
        <position position="2"/>
    </location>
</feature>
<feature type="modified residue" description="Phosphothreonine" evidence="1">
    <location>
        <position position="2"/>
    </location>
</feature>
<dbReference type="EC" id="1.10.3.9" evidence="2"/>
<dbReference type="EMBL" id="DQ226511">
    <property type="protein sequence ID" value="ABB20953.1"/>
    <property type="molecule type" value="Genomic_DNA"/>
</dbReference>
<dbReference type="RefSeq" id="YP_762256.1">
    <property type="nucleotide sequence ID" value="NC_008359.1"/>
</dbReference>
<dbReference type="SMR" id="Q09X22"/>
<dbReference type="GeneID" id="4290561"/>
<dbReference type="GO" id="GO:0009535">
    <property type="term" value="C:chloroplast thylakoid membrane"/>
    <property type="evidence" value="ECO:0007669"/>
    <property type="project" value="UniProtKB-SubCell"/>
</dbReference>
<dbReference type="GO" id="GO:0009523">
    <property type="term" value="C:photosystem II"/>
    <property type="evidence" value="ECO:0007669"/>
    <property type="project" value="UniProtKB-KW"/>
</dbReference>
<dbReference type="GO" id="GO:0016168">
    <property type="term" value="F:chlorophyll binding"/>
    <property type="evidence" value="ECO:0007669"/>
    <property type="project" value="UniProtKB-UniRule"/>
</dbReference>
<dbReference type="GO" id="GO:0045156">
    <property type="term" value="F:electron transporter, transferring electrons within the cyclic electron transport pathway of photosynthesis activity"/>
    <property type="evidence" value="ECO:0007669"/>
    <property type="project" value="InterPro"/>
</dbReference>
<dbReference type="GO" id="GO:0005506">
    <property type="term" value="F:iron ion binding"/>
    <property type="evidence" value="ECO:0007669"/>
    <property type="project" value="UniProtKB-UniRule"/>
</dbReference>
<dbReference type="GO" id="GO:0010242">
    <property type="term" value="F:oxygen evolving activity"/>
    <property type="evidence" value="ECO:0007669"/>
    <property type="project" value="UniProtKB-EC"/>
</dbReference>
<dbReference type="GO" id="GO:0009772">
    <property type="term" value="P:photosynthetic electron transport in photosystem II"/>
    <property type="evidence" value="ECO:0007669"/>
    <property type="project" value="InterPro"/>
</dbReference>
<dbReference type="CDD" id="cd09288">
    <property type="entry name" value="Photosystem-II_D2"/>
    <property type="match status" value="1"/>
</dbReference>
<dbReference type="FunFam" id="1.20.85.10:FF:000001">
    <property type="entry name" value="photosystem II D2 protein-like"/>
    <property type="match status" value="1"/>
</dbReference>
<dbReference type="Gene3D" id="1.20.85.10">
    <property type="entry name" value="Photosystem II protein D1-like"/>
    <property type="match status" value="1"/>
</dbReference>
<dbReference type="HAMAP" id="MF_01383">
    <property type="entry name" value="PSII_PsbD_D2"/>
    <property type="match status" value="1"/>
</dbReference>
<dbReference type="InterPro" id="IPR055266">
    <property type="entry name" value="D1/D2"/>
</dbReference>
<dbReference type="InterPro" id="IPR036854">
    <property type="entry name" value="Photo_II_D1/D2_sf"/>
</dbReference>
<dbReference type="InterPro" id="IPR000484">
    <property type="entry name" value="Photo_RC_L/M"/>
</dbReference>
<dbReference type="InterPro" id="IPR055265">
    <property type="entry name" value="Photo_RC_L/M_CS"/>
</dbReference>
<dbReference type="InterPro" id="IPR005868">
    <property type="entry name" value="PSII_PsbD/D2"/>
</dbReference>
<dbReference type="NCBIfam" id="TIGR01152">
    <property type="entry name" value="psbD"/>
    <property type="match status" value="1"/>
</dbReference>
<dbReference type="PANTHER" id="PTHR33149:SF57">
    <property type="entry name" value="PHOTOSYSTEM II D2 PROTEIN"/>
    <property type="match status" value="1"/>
</dbReference>
<dbReference type="PANTHER" id="PTHR33149">
    <property type="entry name" value="PHOTOSYSTEM II PROTEIN D1"/>
    <property type="match status" value="1"/>
</dbReference>
<dbReference type="Pfam" id="PF00124">
    <property type="entry name" value="Photo_RC"/>
    <property type="match status" value="1"/>
</dbReference>
<dbReference type="PRINTS" id="PR00256">
    <property type="entry name" value="REACTNCENTRE"/>
</dbReference>
<dbReference type="SUPFAM" id="SSF81483">
    <property type="entry name" value="Bacterial photosystem II reaction centre, L and M subunits"/>
    <property type="match status" value="1"/>
</dbReference>
<dbReference type="PROSITE" id="PS00244">
    <property type="entry name" value="REACTION_CENTER"/>
    <property type="match status" value="1"/>
</dbReference>
<comment type="function">
    <text evidence="2">Photosystem II (PSII) is a light-driven water:plastoquinone oxidoreductase that uses light energy to abstract electrons from H(2)O, generating O(2) and a proton gradient subsequently used for ATP formation. It consists of a core antenna complex that captures photons, and an electron transfer chain that converts photonic excitation into a charge separation. The D1/D2 (PsbA/PsbD) reaction center heterodimer binds P680, the primary electron donor of PSII as well as several subsequent electron acceptors. D2 is needed for assembly of a stable PSII complex.</text>
</comment>
<comment type="catalytic activity">
    <reaction evidence="2">
        <text>2 a plastoquinone + 4 hnu + 2 H2O = 2 a plastoquinol + O2</text>
        <dbReference type="Rhea" id="RHEA:36359"/>
        <dbReference type="Rhea" id="RHEA-COMP:9561"/>
        <dbReference type="Rhea" id="RHEA-COMP:9562"/>
        <dbReference type="ChEBI" id="CHEBI:15377"/>
        <dbReference type="ChEBI" id="CHEBI:15379"/>
        <dbReference type="ChEBI" id="CHEBI:17757"/>
        <dbReference type="ChEBI" id="CHEBI:30212"/>
        <dbReference type="ChEBI" id="CHEBI:62192"/>
        <dbReference type="EC" id="1.10.3.9"/>
    </reaction>
</comment>
<comment type="cofactor">
    <text evidence="2">The D1/D2 heterodimer binds P680, chlorophylls that are the primary electron donor of PSII, and subsequent electron acceptors. It shares a non-heme iron and each subunit binds pheophytin, quinone, additional chlorophylls, carotenoids and lipids. There is also a Cl(-1) ion associated with D1 and D2, which is required for oxygen evolution. The PSII complex binds additional chlorophylls, carotenoids and specific lipids.</text>
</comment>
<comment type="subunit">
    <text evidence="2">PSII is composed of 1 copy each of membrane proteins PsbA, PsbB, PsbC, PsbD, PsbE, PsbF, PsbH, PsbI, PsbJ, PsbK, PsbL, PsbM, PsbT, PsbX, PsbY, PsbZ, Psb30/Ycf12, at least 3 peripheral proteins of the oxygen-evolving complex and a large number of cofactors. It forms dimeric complexes.</text>
</comment>
<comment type="subcellular location">
    <subcellularLocation>
        <location evidence="2">Plastid</location>
        <location evidence="2">Chloroplast thylakoid membrane</location>
        <topology evidence="2">Multi-pass membrane protein</topology>
    </subcellularLocation>
</comment>
<comment type="miscellaneous">
    <text evidence="2">2 of the reaction center chlorophylls (ChlD1 and ChlD2) are entirely coordinated by water.</text>
</comment>
<comment type="similarity">
    <text evidence="2">Belongs to the reaction center PufL/M/PsbA/D family.</text>
</comment>
<protein>
    <recommendedName>
        <fullName evidence="2">Photosystem II D2 protein</fullName>
        <shortName evidence="2">PSII D2 protein</shortName>
        <ecNumber evidence="2">1.10.3.9</ecNumber>
    </recommendedName>
    <alternativeName>
        <fullName evidence="2">Photosystem Q(A) protein</fullName>
    </alternativeName>
</protein>
<accession>Q09X22</accession>
<reference key="1">
    <citation type="submission" date="2005-09" db="EMBL/GenBank/DDBJ databases">
        <title>The chloroplast genome of mulberry: structural features and comparative analysis.</title>
        <authorList>
            <person name="Ravi V."/>
            <person name="Khurana J.P."/>
            <person name="Tyagi A.K."/>
            <person name="Khurana P."/>
        </authorList>
    </citation>
    <scope>NUCLEOTIDE SEQUENCE [LARGE SCALE GENOMIC DNA]</scope>
    <source>
        <strain>cv. K2</strain>
    </source>
</reference>
<keyword id="KW-0007">Acetylation</keyword>
<keyword id="KW-0148">Chlorophyll</keyword>
<keyword id="KW-0150">Chloroplast</keyword>
<keyword id="KW-0157">Chromophore</keyword>
<keyword id="KW-0249">Electron transport</keyword>
<keyword id="KW-0408">Iron</keyword>
<keyword id="KW-0460">Magnesium</keyword>
<keyword id="KW-0472">Membrane</keyword>
<keyword id="KW-0479">Metal-binding</keyword>
<keyword id="KW-0560">Oxidoreductase</keyword>
<keyword id="KW-0597">Phosphoprotein</keyword>
<keyword id="KW-0602">Photosynthesis</keyword>
<keyword id="KW-0604">Photosystem II</keyword>
<keyword id="KW-0934">Plastid</keyword>
<keyword id="KW-0793">Thylakoid</keyword>
<keyword id="KW-0812">Transmembrane</keyword>
<keyword id="KW-1133">Transmembrane helix</keyword>
<keyword id="KW-0813">Transport</keyword>
<geneLocation type="chloroplast"/>
<name>PSBD_MORIN</name>
<sequence length="353" mass="39578">MTIALGKFTKDENDLFDIMDDWLRRDRFVFVGWSGLLLFPCAYFALGGWFTGTTFVTSWYTHGLASSYLEGCNFLTAAVSTPANSLAHSLLLLWGPEAQGDFTRWCQLGGLWTFVALHGAFALIGFMLRQFELARSVQLRPYNAIAFSAPIAVFVSVFLIYPLGQSGWFFAPSFGVAAIFRFILFFQGFHNWTLNPFHMMGVAGVLGAALLCAIHGATVENTLFEDGDGANTFRAFNPTQAEETYSMVTANRFWSQIFGVAFSNKRWLHFFMLFVPVTGLWMSALGVVGLALNLRAYDFVSQEIRAAEDPEFETFYTKNILLNEGIRAWMAAQDQPHENLIFPEEVLPRGNAL</sequence>
<gene>
    <name evidence="2" type="primary">psbD</name>
    <name type="ordered locus">MoinCp016</name>
</gene>
<evidence type="ECO:0000250" key="1">
    <source>
        <dbReference type="UniProtKB" id="P56761"/>
    </source>
</evidence>
<evidence type="ECO:0000255" key="2">
    <source>
        <dbReference type="HAMAP-Rule" id="MF_01383"/>
    </source>
</evidence>
<proteinExistence type="inferred from homology"/>
<organism>
    <name type="scientific">Morus indica</name>
    <name type="common">Mulberry</name>
    <dbReference type="NCBI Taxonomy" id="248361"/>
    <lineage>
        <taxon>Eukaryota</taxon>
        <taxon>Viridiplantae</taxon>
        <taxon>Streptophyta</taxon>
        <taxon>Embryophyta</taxon>
        <taxon>Tracheophyta</taxon>
        <taxon>Spermatophyta</taxon>
        <taxon>Magnoliopsida</taxon>
        <taxon>eudicotyledons</taxon>
        <taxon>Gunneridae</taxon>
        <taxon>Pentapetalae</taxon>
        <taxon>rosids</taxon>
        <taxon>fabids</taxon>
        <taxon>Rosales</taxon>
        <taxon>Moraceae</taxon>
        <taxon>Moreae</taxon>
        <taxon>Morus</taxon>
    </lineage>
</organism>